<name>RADA_HAEIN</name>
<evidence type="ECO:0000255" key="1">
    <source>
        <dbReference type="HAMAP-Rule" id="MF_01498"/>
    </source>
</evidence>
<evidence type="ECO:0000305" key="2"/>
<reference key="1">
    <citation type="journal article" date="1995" name="Science">
        <title>Whole-genome random sequencing and assembly of Haemophilus influenzae Rd.</title>
        <authorList>
            <person name="Fleischmann R.D."/>
            <person name="Adams M.D."/>
            <person name="White O."/>
            <person name="Clayton R.A."/>
            <person name="Kirkness E.F."/>
            <person name="Kerlavage A.R."/>
            <person name="Bult C.J."/>
            <person name="Tomb J.-F."/>
            <person name="Dougherty B.A."/>
            <person name="Merrick J.M."/>
            <person name="McKenney K."/>
            <person name="Sutton G.G."/>
            <person name="FitzHugh W."/>
            <person name="Fields C.A."/>
            <person name="Gocayne J.D."/>
            <person name="Scott J.D."/>
            <person name="Shirley R."/>
            <person name="Liu L.-I."/>
            <person name="Glodek A."/>
            <person name="Kelley J.M."/>
            <person name="Weidman J.F."/>
            <person name="Phillips C.A."/>
            <person name="Spriggs T."/>
            <person name="Hedblom E."/>
            <person name="Cotton M.D."/>
            <person name="Utterback T.R."/>
            <person name="Hanna M.C."/>
            <person name="Nguyen D.T."/>
            <person name="Saudek D.M."/>
            <person name="Brandon R.C."/>
            <person name="Fine L.D."/>
            <person name="Fritchman J.L."/>
            <person name="Fuhrmann J.L."/>
            <person name="Geoghagen N.S.M."/>
            <person name="Gnehm C.L."/>
            <person name="McDonald L.A."/>
            <person name="Small K.V."/>
            <person name="Fraser C.M."/>
            <person name="Smith H.O."/>
            <person name="Venter J.C."/>
        </authorList>
    </citation>
    <scope>NUCLEOTIDE SEQUENCE [LARGE SCALE GENOMIC DNA]</scope>
    <source>
        <strain>ATCC 51907 / DSM 11121 / KW20 / Rd</strain>
    </source>
</reference>
<keyword id="KW-0067">ATP-binding</keyword>
<keyword id="KW-0227">DNA damage</keyword>
<keyword id="KW-0234">DNA repair</keyword>
<keyword id="KW-0238">DNA-binding</keyword>
<keyword id="KW-0378">Hydrolase</keyword>
<keyword id="KW-0479">Metal-binding</keyword>
<keyword id="KW-0547">Nucleotide-binding</keyword>
<keyword id="KW-1185">Reference proteome</keyword>
<keyword id="KW-0346">Stress response</keyword>
<keyword id="KW-0862">Zinc</keyword>
<keyword id="KW-0863">Zinc-finger</keyword>
<proteinExistence type="inferred from homology"/>
<dbReference type="EC" id="3.6.4.-" evidence="1"/>
<dbReference type="EMBL" id="L42023">
    <property type="protein sequence ID" value="AAC23242.1"/>
    <property type="status" value="ALT_INIT"/>
    <property type="molecule type" value="Genomic_DNA"/>
</dbReference>
<dbReference type="PIR" id="I64131">
    <property type="entry name" value="I64131"/>
</dbReference>
<dbReference type="RefSeq" id="NP_439739.2">
    <property type="nucleotide sequence ID" value="NC_000907.1"/>
</dbReference>
<dbReference type="SMR" id="P45266"/>
<dbReference type="STRING" id="71421.HI_1597"/>
<dbReference type="MEROPS" id="S16.004"/>
<dbReference type="DNASU" id="950453"/>
<dbReference type="EnsemblBacteria" id="AAC23242">
    <property type="protein sequence ID" value="AAC23242"/>
    <property type="gene ID" value="HI_1597"/>
</dbReference>
<dbReference type="KEGG" id="hin:HI_1597"/>
<dbReference type="PATRIC" id="fig|71421.8.peg.1670"/>
<dbReference type="eggNOG" id="COG1066">
    <property type="taxonomic scope" value="Bacteria"/>
</dbReference>
<dbReference type="HOGENOM" id="CLU_018264_0_1_6"/>
<dbReference type="OrthoDB" id="9803906at2"/>
<dbReference type="PhylomeDB" id="P45266"/>
<dbReference type="BioCyc" id="HINF71421:G1GJ1-1610-MONOMER"/>
<dbReference type="Proteomes" id="UP000000579">
    <property type="component" value="Chromosome"/>
</dbReference>
<dbReference type="GO" id="GO:0005524">
    <property type="term" value="F:ATP binding"/>
    <property type="evidence" value="ECO:0007669"/>
    <property type="project" value="UniProtKB-UniRule"/>
</dbReference>
<dbReference type="GO" id="GO:0016887">
    <property type="term" value="F:ATP hydrolysis activity"/>
    <property type="evidence" value="ECO:0007669"/>
    <property type="project" value="InterPro"/>
</dbReference>
<dbReference type="GO" id="GO:0140664">
    <property type="term" value="F:ATP-dependent DNA damage sensor activity"/>
    <property type="evidence" value="ECO:0007669"/>
    <property type="project" value="InterPro"/>
</dbReference>
<dbReference type="GO" id="GO:0003684">
    <property type="term" value="F:damaged DNA binding"/>
    <property type="evidence" value="ECO:0007669"/>
    <property type="project" value="InterPro"/>
</dbReference>
<dbReference type="GO" id="GO:0008270">
    <property type="term" value="F:zinc ion binding"/>
    <property type="evidence" value="ECO:0007669"/>
    <property type="project" value="UniProtKB-KW"/>
</dbReference>
<dbReference type="GO" id="GO:0000725">
    <property type="term" value="P:recombinational repair"/>
    <property type="evidence" value="ECO:0000318"/>
    <property type="project" value="GO_Central"/>
</dbReference>
<dbReference type="CDD" id="cd01121">
    <property type="entry name" value="RadA_SMS_N"/>
    <property type="match status" value="1"/>
</dbReference>
<dbReference type="FunFam" id="3.30.230.10:FF:000011">
    <property type="entry name" value="DNA repair protein RadA"/>
    <property type="match status" value="1"/>
</dbReference>
<dbReference type="FunFam" id="3.40.50.300:FF:000050">
    <property type="entry name" value="DNA repair protein RadA"/>
    <property type="match status" value="1"/>
</dbReference>
<dbReference type="Gene3D" id="3.30.230.10">
    <property type="match status" value="1"/>
</dbReference>
<dbReference type="Gene3D" id="3.40.50.300">
    <property type="entry name" value="P-loop containing nucleotide triphosphate hydrolases"/>
    <property type="match status" value="1"/>
</dbReference>
<dbReference type="HAMAP" id="MF_01498">
    <property type="entry name" value="RadA_bact"/>
    <property type="match status" value="1"/>
</dbReference>
<dbReference type="InterPro" id="IPR003593">
    <property type="entry name" value="AAA+_ATPase"/>
</dbReference>
<dbReference type="InterPro" id="IPR004504">
    <property type="entry name" value="DNA_repair_RadA"/>
</dbReference>
<dbReference type="InterPro" id="IPR027417">
    <property type="entry name" value="P-loop_NTPase"/>
</dbReference>
<dbReference type="InterPro" id="IPR020588">
    <property type="entry name" value="RecA_ATP-bd"/>
</dbReference>
<dbReference type="InterPro" id="IPR020568">
    <property type="entry name" value="Ribosomal_Su5_D2-typ_SF"/>
</dbReference>
<dbReference type="InterPro" id="IPR014721">
    <property type="entry name" value="Ribsml_uS5_D2-typ_fold_subgr"/>
</dbReference>
<dbReference type="InterPro" id="IPR041166">
    <property type="entry name" value="Rubredoxin_2"/>
</dbReference>
<dbReference type="NCBIfam" id="TIGR00416">
    <property type="entry name" value="sms"/>
    <property type="match status" value="1"/>
</dbReference>
<dbReference type="PANTHER" id="PTHR32472">
    <property type="entry name" value="DNA REPAIR PROTEIN RADA"/>
    <property type="match status" value="1"/>
</dbReference>
<dbReference type="PANTHER" id="PTHR32472:SF10">
    <property type="entry name" value="DNA REPAIR PROTEIN RADA-LIKE PROTEIN"/>
    <property type="match status" value="1"/>
</dbReference>
<dbReference type="Pfam" id="PF13481">
    <property type="entry name" value="AAA_25"/>
    <property type="match status" value="1"/>
</dbReference>
<dbReference type="Pfam" id="PF13541">
    <property type="entry name" value="ChlI"/>
    <property type="match status" value="1"/>
</dbReference>
<dbReference type="Pfam" id="PF18073">
    <property type="entry name" value="Zn_ribbon_LapB"/>
    <property type="match status" value="1"/>
</dbReference>
<dbReference type="PRINTS" id="PR01874">
    <property type="entry name" value="DNAREPAIRADA"/>
</dbReference>
<dbReference type="SMART" id="SM00382">
    <property type="entry name" value="AAA"/>
    <property type="match status" value="1"/>
</dbReference>
<dbReference type="SUPFAM" id="SSF52540">
    <property type="entry name" value="P-loop containing nucleoside triphosphate hydrolases"/>
    <property type="match status" value="1"/>
</dbReference>
<dbReference type="SUPFAM" id="SSF54211">
    <property type="entry name" value="Ribosomal protein S5 domain 2-like"/>
    <property type="match status" value="1"/>
</dbReference>
<dbReference type="PROSITE" id="PS50162">
    <property type="entry name" value="RECA_2"/>
    <property type="match status" value="1"/>
</dbReference>
<organism>
    <name type="scientific">Haemophilus influenzae (strain ATCC 51907 / DSM 11121 / KW20 / Rd)</name>
    <dbReference type="NCBI Taxonomy" id="71421"/>
    <lineage>
        <taxon>Bacteria</taxon>
        <taxon>Pseudomonadati</taxon>
        <taxon>Pseudomonadota</taxon>
        <taxon>Gammaproteobacteria</taxon>
        <taxon>Pasteurellales</taxon>
        <taxon>Pasteurellaceae</taxon>
        <taxon>Haemophilus</taxon>
    </lineage>
</organism>
<feature type="chain" id="PRO_0000187927" description="DNA repair protein RadA">
    <location>
        <begin position="1"/>
        <end position="458"/>
    </location>
</feature>
<feature type="zinc finger region" description="C4-type" evidence="1">
    <location>
        <begin position="11"/>
        <end position="28"/>
    </location>
</feature>
<feature type="region of interest" description="Lon-protease-like" evidence="1">
    <location>
        <begin position="355"/>
        <end position="458"/>
    </location>
</feature>
<feature type="short sequence motif" description="RadA KNRFG motif" evidence="1">
    <location>
        <begin position="256"/>
        <end position="260"/>
    </location>
</feature>
<feature type="binding site" evidence="1">
    <location>
        <begin position="100"/>
        <end position="107"/>
    </location>
    <ligand>
        <name>ATP</name>
        <dbReference type="ChEBI" id="CHEBI:30616"/>
    </ligand>
</feature>
<protein>
    <recommendedName>
        <fullName evidence="1">DNA repair protein RadA</fullName>
        <ecNumber evidence="1">3.6.4.-</ecNumber>
    </recommendedName>
    <alternativeName>
        <fullName evidence="1">Branch migration protein RadA</fullName>
    </alternativeName>
</protein>
<comment type="function">
    <text evidence="1">DNA-dependent ATPase involved in processing of recombination intermediates, plays a role in repairing DNA breaks. Stimulates the branch migration of RecA-mediated strand transfer reactions, allowing the 3' invading strand to extend heteroduplex DNA faster. Binds ssDNA in the presence of ADP but not other nucleotides, has ATPase activity that is stimulated by ssDNA and various branched DNA structures, but inhibited by SSB. Does not have RecA's homology-searching function.</text>
</comment>
<comment type="domain">
    <text evidence="1">Has a putative N-terminal zinc-finger, a middle region with homology to RecA with ATPase motifs including the RadA KNRFG motif, while the C-terminus is homologous to Lon protease.</text>
</comment>
<comment type="similarity">
    <text evidence="1">Belongs to the RecA family. RadA subfamily.</text>
</comment>
<comment type="sequence caution" evidence="2">
    <conflict type="erroneous initiation">
        <sequence resource="EMBL-CDS" id="AAC23242"/>
    </conflict>
    <text>Extended N-terminus.</text>
</comment>
<gene>
    <name evidence="1" type="primary">radA</name>
    <name type="ordered locus">HI_1597</name>
</gene>
<sequence length="458" mass="49371">MAKAPKTAYVCNDCGAEFSRWQGQCSACKAWNTITEVRLISTAKSKNDRFSGYAGETQAKIQTLSEISLQETPRFSSGFSELDRVLGGGIVPGSAILIGGHPGAGKSTLLLQVMCGLAKNMTALYVTGEESLQQVAMRASRLGLPSDQLKMLSETSVEQICNLADQLKPQIIVVDSIQVMHLADIQSSPGSVAQVRECASFLTRYAKTRQVAIIMVGHVTKDGTLAGPKVLEHAIDCSLLLEGEADSRYRTLRSHKNRFGAVNELGVFGMTEQGLREVKNPSAIFLSRGDEITSGSSVMVLWEGTRPLLVEIQALVDHSMLANPRRVAVGLEQNRLALLLAVLHRHGGLQMADQDVFVNVVGGVKVSETSADLALLLALISSFRNRPLPQDLVIFGEVGLAGEIRPVPSGQERISEAAKHGFKRAIVPFGNKPKSAVENMQVFTVKKLTDALAVLDNL</sequence>
<accession>P45266</accession>